<protein>
    <recommendedName>
        <fullName>Pro-neuropeptide Y</fullName>
    </recommendedName>
    <component>
        <recommendedName>
            <fullName>Neuropeptide Y</fullName>
        </recommendedName>
        <alternativeName>
            <fullName>Neuropeptide tyrosine</fullName>
            <shortName>NPY</shortName>
        </alternativeName>
    </component>
    <component>
        <recommendedName>
            <fullName>C-flanking peptide of NPY</fullName>
            <shortName>CPON</shortName>
        </recommendedName>
    </component>
</protein>
<reference key="1">
    <citation type="journal article" date="1984" name="Proc. Natl. Acad. Sci. U.S.A.">
        <title>Cloning, characterization, and DNA sequence of a human cDNA encoding neuropeptide tyrosine.</title>
        <authorList>
            <person name="Minth C.D."/>
            <person name="Bloom S.R."/>
            <person name="Polak J.M."/>
            <person name="Dixon J.E."/>
        </authorList>
    </citation>
    <scope>NUCLEOTIDE SEQUENCE [MRNA]</scope>
    <scope>AMIDATION AT TYR-64</scope>
</reference>
<reference key="2">
    <citation type="journal article" date="1986" name="J. Biol. Chem.">
        <title>Characterization, sequence, and expression of the cloned human neuropeptide Y gene.</title>
        <authorList>
            <person name="Minth C.D."/>
            <person name="Andrews P.C."/>
            <person name="Dixon J.E."/>
        </authorList>
    </citation>
    <scope>NUCLEOTIDE SEQUENCE [GENOMIC DNA]</scope>
</reference>
<reference key="3">
    <citation type="journal article" date="1986" name="J. Clin. Invest.">
        <title>Genes encoding pancreatic polypeptide and neuropeptide Y are on human chromosomes 17 and 7.</title>
        <authorList>
            <person name="Takeuchi T."/>
            <person name="Gumucio D.L."/>
            <person name="Yamada T."/>
            <person name="Meisler M.H."/>
            <person name="Minth C.D."/>
            <person name="Dixon J.E."/>
            <person name="Eddy R.E."/>
            <person name="Shows T.B."/>
        </authorList>
    </citation>
    <scope>NUCLEOTIDE SEQUENCE [MRNA]</scope>
</reference>
<reference key="4">
    <citation type="journal article" date="2003" name="Nature">
        <title>The DNA sequence of human chromosome 7.</title>
        <authorList>
            <person name="Hillier L.W."/>
            <person name="Fulton R.S."/>
            <person name="Fulton L.A."/>
            <person name="Graves T.A."/>
            <person name="Pepin K.H."/>
            <person name="Wagner-McPherson C."/>
            <person name="Layman D."/>
            <person name="Maas J."/>
            <person name="Jaeger S."/>
            <person name="Walker R."/>
            <person name="Wylie K."/>
            <person name="Sekhon M."/>
            <person name="Becker M.C."/>
            <person name="O'Laughlin M.D."/>
            <person name="Schaller M.E."/>
            <person name="Fewell G.A."/>
            <person name="Delehaunty K.D."/>
            <person name="Miner T.L."/>
            <person name="Nash W.E."/>
            <person name="Cordes M."/>
            <person name="Du H."/>
            <person name="Sun H."/>
            <person name="Edwards J."/>
            <person name="Bradshaw-Cordum H."/>
            <person name="Ali J."/>
            <person name="Andrews S."/>
            <person name="Isak A."/>
            <person name="Vanbrunt A."/>
            <person name="Nguyen C."/>
            <person name="Du F."/>
            <person name="Lamar B."/>
            <person name="Courtney L."/>
            <person name="Kalicki J."/>
            <person name="Ozersky P."/>
            <person name="Bielicki L."/>
            <person name="Scott K."/>
            <person name="Holmes A."/>
            <person name="Harkins R."/>
            <person name="Harris A."/>
            <person name="Strong C.M."/>
            <person name="Hou S."/>
            <person name="Tomlinson C."/>
            <person name="Dauphin-Kohlberg S."/>
            <person name="Kozlowicz-Reilly A."/>
            <person name="Leonard S."/>
            <person name="Rohlfing T."/>
            <person name="Rock S.M."/>
            <person name="Tin-Wollam A.-M."/>
            <person name="Abbott A."/>
            <person name="Minx P."/>
            <person name="Maupin R."/>
            <person name="Strowmatt C."/>
            <person name="Latreille P."/>
            <person name="Miller N."/>
            <person name="Johnson D."/>
            <person name="Murray J."/>
            <person name="Woessner J.P."/>
            <person name="Wendl M.C."/>
            <person name="Yang S.-P."/>
            <person name="Schultz B.R."/>
            <person name="Wallis J.W."/>
            <person name="Spieth J."/>
            <person name="Bieri T.A."/>
            <person name="Nelson J.O."/>
            <person name="Berkowicz N."/>
            <person name="Wohldmann P.E."/>
            <person name="Cook L.L."/>
            <person name="Hickenbotham M.T."/>
            <person name="Eldred J."/>
            <person name="Williams D."/>
            <person name="Bedell J.A."/>
            <person name="Mardis E.R."/>
            <person name="Clifton S.W."/>
            <person name="Chissoe S.L."/>
            <person name="Marra M.A."/>
            <person name="Raymond C."/>
            <person name="Haugen E."/>
            <person name="Gillett W."/>
            <person name="Zhou Y."/>
            <person name="James R."/>
            <person name="Phelps K."/>
            <person name="Iadanoto S."/>
            <person name="Bubb K."/>
            <person name="Simms E."/>
            <person name="Levy R."/>
            <person name="Clendenning J."/>
            <person name="Kaul R."/>
            <person name="Kent W.J."/>
            <person name="Furey T.S."/>
            <person name="Baertsch R.A."/>
            <person name="Brent M.R."/>
            <person name="Keibler E."/>
            <person name="Flicek P."/>
            <person name="Bork P."/>
            <person name="Suyama M."/>
            <person name="Bailey J.A."/>
            <person name="Portnoy M.E."/>
            <person name="Torrents D."/>
            <person name="Chinwalla A.T."/>
            <person name="Gish W.R."/>
            <person name="Eddy S.R."/>
            <person name="McPherson J.D."/>
            <person name="Olson M.V."/>
            <person name="Eichler E.E."/>
            <person name="Green E.D."/>
            <person name="Waterston R.H."/>
            <person name="Wilson R.K."/>
        </authorList>
    </citation>
    <scope>NUCLEOTIDE SEQUENCE [LARGE SCALE GENOMIC DNA]</scope>
</reference>
<reference key="5">
    <citation type="journal article" date="2004" name="Genome Res.">
        <title>The status, quality, and expansion of the NIH full-length cDNA project: the Mammalian Gene Collection (MGC).</title>
        <authorList>
            <consortium name="The MGC Project Team"/>
        </authorList>
    </citation>
    <scope>NUCLEOTIDE SEQUENCE [LARGE SCALE MRNA]</scope>
    <source>
        <tissue>Brain</tissue>
    </source>
</reference>
<reference key="6">
    <citation type="journal article" date="1985" name="Neuropeptides">
        <title>Presence of the predicted C-flanking peptide of neuropeptide Y (CPON) in tissue extracts.</title>
        <authorList>
            <person name="Allen J.M."/>
            <person name="Polak J.M."/>
            <person name="Bloom S.R."/>
        </authorList>
    </citation>
    <scope>IDENTIFICATION OF CPON</scope>
</reference>
<reference key="7">
    <citation type="journal article" date="2011" name="FEBS J.">
        <title>Neuropeptide Y, B-type natriuretic peptide, substance P and peptide YY are novel substrates of fibroblast activation protein-alpha.</title>
        <authorList>
            <person name="Keane F.M."/>
            <person name="Nadvi N.A."/>
            <person name="Yao T.W."/>
            <person name="Gorrell M.D."/>
        </authorList>
    </citation>
    <scope>CLEAVAGE BY FAP</scope>
    <scope>CLEAVAGE SITE</scope>
</reference>
<reference key="8">
    <citation type="journal article" date="2014" name="J. Proteomics">
        <title>An enzyme assisted RP-RPLC approach for in-depth analysis of human liver phosphoproteome.</title>
        <authorList>
            <person name="Bian Y."/>
            <person name="Song C."/>
            <person name="Cheng K."/>
            <person name="Dong M."/>
            <person name="Wang F."/>
            <person name="Huang J."/>
            <person name="Sun D."/>
            <person name="Wang L."/>
            <person name="Ye M."/>
            <person name="Zou H."/>
        </authorList>
    </citation>
    <scope>PHOSPHORYLATION [LARGE SCALE ANALYSIS] AT THR-83</scope>
    <scope>IDENTIFICATION BY MASS SPECTROMETRY [LARGE SCALE ANALYSIS]</scope>
    <source>
        <tissue>Liver</tissue>
    </source>
</reference>
<reference key="9">
    <citation type="journal article" date="1992" name="Eur. J. Biochem.">
        <title>Solution conformation of human neuropeptide Y by 1H nuclear magnetic resonance and restrained molecular dynamics.</title>
        <authorList>
            <person name="Darbon H."/>
            <person name="Bernassau J.-M."/>
            <person name="Deleuze C."/>
            <person name="Chenu J."/>
            <person name="Roussel A."/>
            <person name="Cambillau C."/>
        </authorList>
    </citation>
    <scope>STRUCTURE BY NMR OF 29-64</scope>
</reference>
<reference key="10">
    <citation type="journal article" date="1996" name="J. Biomol. NMR">
        <title>Solution structure of human neuropeptide Y.</title>
        <authorList>
            <person name="Monks S.A."/>
            <person name="Karagianis G."/>
            <person name="Howlett G.J."/>
            <person name="Norton R.S."/>
        </authorList>
    </citation>
    <scope>STRUCTURE BY NMR OF 29-64</scope>
</reference>
<reference key="11">
    <citation type="journal article" date="1999" name="Biochim. Biophys. Acta">
        <title>Helical structure and self-association in a 13 residue neuropeptide Y Y2 receptor agonist: relationship to biological activity.</title>
        <authorList>
            <person name="Barnham K.J."/>
            <person name="Catalfamo F."/>
            <person name="Pallaghy P.K."/>
            <person name="Howlett G.J."/>
            <person name="Norton R.S."/>
        </authorList>
    </citation>
    <scope>STRUCTURE BY NMR OF 52-64</scope>
</reference>
<accession>P01303</accession>
<feature type="signal peptide" evidence="3">
    <location>
        <begin position="1"/>
        <end position="28"/>
    </location>
</feature>
<feature type="peptide" id="PRO_0000025321" description="Neuropeptide Y">
    <location>
        <begin position="29"/>
        <end position="64"/>
    </location>
</feature>
<feature type="peptide" id="PRO_0000025322" description="C-flanking peptide of NPY">
    <location>
        <begin position="68"/>
        <end position="97"/>
    </location>
</feature>
<feature type="site" description="Cleavage; by FAP" evidence="2">
    <location>
        <begin position="30"/>
        <end position="31"/>
    </location>
</feature>
<feature type="modified residue" description="Tyrosine amide" evidence="3">
    <location>
        <position position="64"/>
    </location>
</feature>
<feature type="modified residue" description="Phosphothreonine" evidence="5">
    <location>
        <position position="83"/>
    </location>
</feature>
<feature type="sequence variant" id="VAR_014598" description="In dbSNP:rs16139.">
    <original>L</original>
    <variation>P</variation>
    <location>
        <position position="7"/>
    </location>
</feature>
<feature type="sequence variant" id="VAR_014599" description="In dbSNP:rs5571.">
    <original>L</original>
    <variation>M</variation>
    <location>
        <position position="22"/>
    </location>
</feature>
<feature type="sequence conflict" description="In Ref. 2; AAA59945." evidence="4" ref="2">
    <original>R</original>
    <variation>G</variation>
    <location>
        <position position="53"/>
    </location>
</feature>
<feature type="strand" evidence="6">
    <location>
        <begin position="31"/>
        <end position="33"/>
    </location>
</feature>
<feature type="helix" evidence="7">
    <location>
        <begin position="42"/>
        <end position="61"/>
    </location>
</feature>
<proteinExistence type="evidence at protein level"/>
<comment type="function">
    <text>NPY is implicated in the control of feeding and in secretion of gonadotrophin-release hormone.</text>
</comment>
<comment type="interaction">
    <interactant intactId="EBI-3905877">
        <id>P01303</id>
    </interactant>
    <interactant intactId="EBI-10177172">
        <id>F1D8P7</id>
        <label>NR1H2</label>
    </interactant>
    <organismsDiffer>false</organismsDiffer>
    <experiments>3</experiments>
</comment>
<comment type="interaction">
    <interactant intactId="EBI-3905877">
        <id>P01303</id>
    </interactant>
    <interactant intactId="EBI-947187">
        <id>Q9UHD9</id>
        <label>UBQLN2</label>
    </interactant>
    <organismsDiffer>false</organismsDiffer>
    <experiments>3</experiments>
</comment>
<comment type="subcellular location">
    <subcellularLocation>
        <location>Secreted</location>
    </subcellularLocation>
    <subcellularLocation>
        <location evidence="1">Cytoplasmic vesicle</location>
        <location evidence="1">Secretory vesicle</location>
        <location evidence="1">Neuronal dense core vesicle</location>
    </subcellularLocation>
</comment>
<comment type="tissue specificity">
    <text>One of the most abundant peptides in the nervous system. Also found in some chromaffin cells of the adrenal medulla.</text>
</comment>
<comment type="PTM">
    <text evidence="2">The neuropeptide Y form is cleaved at Pro-30 by the prolyl endopeptidase FAP (seprase) activity (in vitro).</text>
</comment>
<comment type="similarity">
    <text evidence="4">Belongs to the NPY family.</text>
</comment>
<comment type="online information" name="Wikipedia">
    <link uri="https://en.wikipedia.org/wiki/Neuropeptide_Y"/>
    <text>Neuropeptide Y entry</text>
</comment>
<comment type="online information" name="Atlas of Genetics and Cytogenetics in Oncology and Haematology">
    <link uri="https://atlasgeneticsoncology.org/gene/44438/NPY"/>
</comment>
<name>NPY_HUMAN</name>
<evidence type="ECO:0000250" key="1">
    <source>
        <dbReference type="UniProtKB" id="P07808"/>
    </source>
</evidence>
<evidence type="ECO:0000269" key="2">
    <source>
    </source>
</evidence>
<evidence type="ECO:0000269" key="3">
    <source>
    </source>
</evidence>
<evidence type="ECO:0000305" key="4"/>
<evidence type="ECO:0007744" key="5">
    <source>
    </source>
</evidence>
<evidence type="ECO:0007829" key="6">
    <source>
        <dbReference type="PDB" id="1RON"/>
    </source>
</evidence>
<evidence type="ECO:0007829" key="7">
    <source>
        <dbReference type="PDB" id="7RTA"/>
    </source>
</evidence>
<keyword id="KW-0002">3D-structure</keyword>
<keyword id="KW-0027">Amidation</keyword>
<keyword id="KW-0165">Cleavage on pair of basic residues</keyword>
<keyword id="KW-0968">Cytoplasmic vesicle</keyword>
<keyword id="KW-0527">Neuropeptide</keyword>
<keyword id="KW-0597">Phosphoprotein</keyword>
<keyword id="KW-1267">Proteomics identification</keyword>
<keyword id="KW-1185">Reference proteome</keyword>
<keyword id="KW-0964">Secreted</keyword>
<keyword id="KW-0732">Signal</keyword>
<gene>
    <name type="primary">NPY</name>
</gene>
<organism>
    <name type="scientific">Homo sapiens</name>
    <name type="common">Human</name>
    <dbReference type="NCBI Taxonomy" id="9606"/>
    <lineage>
        <taxon>Eukaryota</taxon>
        <taxon>Metazoa</taxon>
        <taxon>Chordata</taxon>
        <taxon>Craniata</taxon>
        <taxon>Vertebrata</taxon>
        <taxon>Euteleostomi</taxon>
        <taxon>Mammalia</taxon>
        <taxon>Eutheria</taxon>
        <taxon>Euarchontoglires</taxon>
        <taxon>Primates</taxon>
        <taxon>Haplorrhini</taxon>
        <taxon>Catarrhini</taxon>
        <taxon>Hominidae</taxon>
        <taxon>Homo</taxon>
    </lineage>
</organism>
<dbReference type="EMBL" id="K01911">
    <property type="protein sequence ID" value="AAA59944.1"/>
    <property type="molecule type" value="mRNA"/>
</dbReference>
<dbReference type="EMBL" id="M14298">
    <property type="protein sequence ID" value="AAA59945.1"/>
    <property type="molecule type" value="Genomic_DNA"/>
</dbReference>
<dbReference type="EMBL" id="M14296">
    <property type="protein sequence ID" value="AAA59945.1"/>
    <property type="status" value="JOINED"/>
    <property type="molecule type" value="Genomic_DNA"/>
</dbReference>
<dbReference type="EMBL" id="M14297">
    <property type="protein sequence ID" value="AAA59945.1"/>
    <property type="status" value="JOINED"/>
    <property type="molecule type" value="Genomic_DNA"/>
</dbReference>
<dbReference type="EMBL" id="M15789">
    <property type="protein sequence ID" value="AAA59946.1"/>
    <property type="molecule type" value="mRNA"/>
</dbReference>
<dbReference type="EMBL" id="AC004485">
    <property type="protein sequence ID" value="AAQ96843.1"/>
    <property type="molecule type" value="Genomic_DNA"/>
</dbReference>
<dbReference type="EMBL" id="BC029497">
    <property type="protein sequence ID" value="AAH29497.1"/>
    <property type="molecule type" value="mRNA"/>
</dbReference>
<dbReference type="CCDS" id="CCDS5387.1"/>
<dbReference type="PIR" id="A25198">
    <property type="entry name" value="NYHUY"/>
</dbReference>
<dbReference type="RefSeq" id="NP_000896.1">
    <property type="nucleotide sequence ID" value="NM_000905.4"/>
</dbReference>
<dbReference type="PDB" id="1QFA">
    <property type="method" value="NMR"/>
    <property type="chains" value="A=52-64"/>
</dbReference>
<dbReference type="PDB" id="1RON">
    <property type="method" value="NMR"/>
    <property type="chains" value="A=29-64"/>
</dbReference>
<dbReference type="PDB" id="7RTA">
    <property type="method" value="X-ray"/>
    <property type="resolution" value="2.60 A"/>
    <property type="chains" value="N=29-64"/>
</dbReference>
<dbReference type="PDB" id="7VGX">
    <property type="method" value="EM"/>
    <property type="resolution" value="3.20 A"/>
    <property type="chains" value="L=29-64"/>
</dbReference>
<dbReference type="PDB" id="7X9A">
    <property type="method" value="EM"/>
    <property type="resolution" value="3.20 A"/>
    <property type="chains" value="P=29-64"/>
</dbReference>
<dbReference type="PDB" id="7X9B">
    <property type="method" value="EM"/>
    <property type="resolution" value="3.40 A"/>
    <property type="chains" value="P=29-64"/>
</dbReference>
<dbReference type="PDB" id="7YOO">
    <property type="method" value="EM"/>
    <property type="resolution" value="3.11 A"/>
    <property type="chains" value="L=29-64"/>
</dbReference>
<dbReference type="PDB" id="8K6M">
    <property type="method" value="EM"/>
    <property type="resolution" value="3.30 A"/>
    <property type="chains" value="E=29-64"/>
</dbReference>
<dbReference type="PDB" id="8K6N">
    <property type="method" value="EM"/>
    <property type="resolution" value="3.20 A"/>
    <property type="chains" value="D=29-64"/>
</dbReference>
<dbReference type="PDB" id="8K6O">
    <property type="method" value="EM"/>
    <property type="resolution" value="3.30 A"/>
    <property type="chains" value="E=29-64"/>
</dbReference>
<dbReference type="PDBsum" id="1QFA"/>
<dbReference type="PDBsum" id="1RON"/>
<dbReference type="PDBsum" id="7RTA"/>
<dbReference type="PDBsum" id="7VGX"/>
<dbReference type="PDBsum" id="7X9A"/>
<dbReference type="PDBsum" id="7X9B"/>
<dbReference type="PDBsum" id="7YOO"/>
<dbReference type="PDBsum" id="8K6M"/>
<dbReference type="PDBsum" id="8K6N"/>
<dbReference type="PDBsum" id="8K6O"/>
<dbReference type="BMRB" id="P01303"/>
<dbReference type="EMDB" id="EMD-31979"/>
<dbReference type="EMDB" id="EMD-33069"/>
<dbReference type="EMDB" id="EMD-33070"/>
<dbReference type="EMDB" id="EMD-33985"/>
<dbReference type="EMDB" id="EMD-36923"/>
<dbReference type="EMDB" id="EMD-36924"/>
<dbReference type="EMDB" id="EMD-36925"/>
<dbReference type="SMR" id="P01303"/>
<dbReference type="BioGRID" id="110914">
    <property type="interactions" value="8"/>
</dbReference>
<dbReference type="FunCoup" id="P01303">
    <property type="interactions" value="663"/>
</dbReference>
<dbReference type="IntAct" id="P01303">
    <property type="interactions" value="12"/>
</dbReference>
<dbReference type="MINT" id="P01303"/>
<dbReference type="STRING" id="9606.ENSP00000384364"/>
<dbReference type="BindingDB" id="P01303"/>
<dbReference type="DrugBank" id="DB02952">
    <property type="generic name" value="2-aminoisobutyric acid"/>
</dbReference>
<dbReference type="DrugBank" id="DB03380">
    <property type="generic name" value="L-tyrosinamide"/>
</dbReference>
<dbReference type="DrugBank" id="DB00191">
    <property type="generic name" value="Phentermine"/>
</dbReference>
<dbReference type="iPTMnet" id="P01303"/>
<dbReference type="PhosphoSitePlus" id="P01303"/>
<dbReference type="BioMuta" id="NPY"/>
<dbReference type="DMDM" id="128117"/>
<dbReference type="CPTAC" id="CPTAC-1287"/>
<dbReference type="CPTAC" id="CPTAC-1288"/>
<dbReference type="CPTAC" id="CPTAC-1289"/>
<dbReference type="CPTAC" id="CPTAC-1290"/>
<dbReference type="CPTAC" id="CPTAC-1291"/>
<dbReference type="MassIVE" id="P01303"/>
<dbReference type="PaxDb" id="9606-ENSP00000384364"/>
<dbReference type="PeptideAtlas" id="P01303"/>
<dbReference type="ProteomicsDB" id="51373"/>
<dbReference type="ABCD" id="P01303">
    <property type="antibodies" value="1 sequenced antibody"/>
</dbReference>
<dbReference type="Antibodypedia" id="12195">
    <property type="antibodies" value="589 antibodies from 40 providers"/>
</dbReference>
<dbReference type="DNASU" id="4852"/>
<dbReference type="Ensembl" id="ENST00000242152.7">
    <property type="protein sequence ID" value="ENSP00000242152.2"/>
    <property type="gene ID" value="ENSG00000122585.8"/>
</dbReference>
<dbReference type="Ensembl" id="ENST00000405982.1">
    <property type="protein sequence ID" value="ENSP00000385282.1"/>
    <property type="gene ID" value="ENSG00000122585.8"/>
</dbReference>
<dbReference type="Ensembl" id="ENST00000407573.5">
    <property type="protein sequence ID" value="ENSP00000384364.1"/>
    <property type="gene ID" value="ENSG00000122585.8"/>
</dbReference>
<dbReference type="GeneID" id="4852"/>
<dbReference type="KEGG" id="hsa:4852"/>
<dbReference type="MANE-Select" id="ENST00000242152.7">
    <property type="protein sequence ID" value="ENSP00000242152.2"/>
    <property type="RefSeq nucleotide sequence ID" value="NM_000905.4"/>
    <property type="RefSeq protein sequence ID" value="NP_000896.1"/>
</dbReference>
<dbReference type="UCSC" id="uc003sww.3">
    <property type="organism name" value="human"/>
</dbReference>
<dbReference type="AGR" id="HGNC:7955"/>
<dbReference type="CTD" id="4852"/>
<dbReference type="DisGeNET" id="4852"/>
<dbReference type="GeneCards" id="NPY"/>
<dbReference type="HGNC" id="HGNC:7955">
    <property type="gene designation" value="NPY"/>
</dbReference>
<dbReference type="HPA" id="ENSG00000122585">
    <property type="expression patterns" value="Group enriched (adrenal gland, brain, prostate)"/>
</dbReference>
<dbReference type="MalaCards" id="NPY"/>
<dbReference type="MIM" id="162640">
    <property type="type" value="gene"/>
</dbReference>
<dbReference type="neXtProt" id="NX_P01303"/>
<dbReference type="OpenTargets" id="ENSG00000122585"/>
<dbReference type="PharmGKB" id="PA255"/>
<dbReference type="VEuPathDB" id="HostDB:ENSG00000122585"/>
<dbReference type="eggNOG" id="ENOG502S2BU">
    <property type="taxonomic scope" value="Eukaryota"/>
</dbReference>
<dbReference type="GeneTree" id="ENSGT00940000156475"/>
<dbReference type="HOGENOM" id="CLU_162379_1_0_1"/>
<dbReference type="InParanoid" id="P01303"/>
<dbReference type="OMA" id="YEDPAMW"/>
<dbReference type="OrthoDB" id="9852947at2759"/>
<dbReference type="PAN-GO" id="P01303">
    <property type="GO annotations" value="5 GO annotations based on evolutionary models"/>
</dbReference>
<dbReference type="PhylomeDB" id="P01303"/>
<dbReference type="TreeFam" id="TF332778"/>
<dbReference type="PathwayCommons" id="P01303"/>
<dbReference type="Reactome" id="R-HSA-375276">
    <property type="pathway name" value="Peptide ligand-binding receptors"/>
</dbReference>
<dbReference type="Reactome" id="R-HSA-418594">
    <property type="pathway name" value="G alpha (i) signalling events"/>
</dbReference>
<dbReference type="Reactome" id="R-HSA-9615017">
    <property type="pathway name" value="FOXO-mediated transcription of oxidative stress, metabolic and neuronal genes"/>
</dbReference>
<dbReference type="SignaLink" id="P01303"/>
<dbReference type="SIGNOR" id="P01303"/>
<dbReference type="BioGRID-ORCS" id="4852">
    <property type="hits" value="4 hits in 1143 CRISPR screens"/>
</dbReference>
<dbReference type="ChiTaRS" id="NPY">
    <property type="organism name" value="human"/>
</dbReference>
<dbReference type="EvolutionaryTrace" id="P01303"/>
<dbReference type="GeneWiki" id="Neuropeptide_Y"/>
<dbReference type="GenomeRNAi" id="4852"/>
<dbReference type="Pharos" id="P01303">
    <property type="development level" value="Tbio"/>
</dbReference>
<dbReference type="PRO" id="PR:P01303"/>
<dbReference type="Proteomes" id="UP000005640">
    <property type="component" value="Chromosome 7"/>
</dbReference>
<dbReference type="RNAct" id="P01303">
    <property type="molecule type" value="protein"/>
</dbReference>
<dbReference type="Bgee" id="ENSG00000122585">
    <property type="expression patterns" value="Expressed in ganglionic eminence and 146 other cell types or tissues"/>
</dbReference>
<dbReference type="ExpressionAtlas" id="P01303">
    <property type="expression patterns" value="baseline and differential"/>
</dbReference>
<dbReference type="GO" id="GO:0005576">
    <property type="term" value="C:extracellular region"/>
    <property type="evidence" value="ECO:0000304"/>
    <property type="project" value="Reactome"/>
</dbReference>
<dbReference type="GO" id="GO:0005615">
    <property type="term" value="C:extracellular space"/>
    <property type="evidence" value="ECO:0000250"/>
    <property type="project" value="HGNC-UCL"/>
</dbReference>
<dbReference type="GO" id="GO:0098982">
    <property type="term" value="C:GABA-ergic synapse"/>
    <property type="evidence" value="ECO:0007669"/>
    <property type="project" value="Ensembl"/>
</dbReference>
<dbReference type="GO" id="GO:0005794">
    <property type="term" value="C:Golgi apparatus"/>
    <property type="evidence" value="ECO:0000314"/>
    <property type="project" value="HPA"/>
</dbReference>
<dbReference type="GO" id="GO:0098992">
    <property type="term" value="C:neuronal dense core vesicle"/>
    <property type="evidence" value="ECO:0000250"/>
    <property type="project" value="UniProtKB"/>
</dbReference>
<dbReference type="GO" id="GO:0043204">
    <property type="term" value="C:perikaryon"/>
    <property type="evidence" value="ECO:0007669"/>
    <property type="project" value="Ensembl"/>
</dbReference>
<dbReference type="GO" id="GO:0048471">
    <property type="term" value="C:perinuclear region of cytoplasm"/>
    <property type="evidence" value="ECO:0007669"/>
    <property type="project" value="Ensembl"/>
</dbReference>
<dbReference type="GO" id="GO:0043195">
    <property type="term" value="C:terminal bouton"/>
    <property type="evidence" value="ECO:0007669"/>
    <property type="project" value="Ensembl"/>
</dbReference>
<dbReference type="GO" id="GO:0005246">
    <property type="term" value="F:calcium channel regulator activity"/>
    <property type="evidence" value="ECO:0000304"/>
    <property type="project" value="ProtInc"/>
</dbReference>
<dbReference type="GO" id="GO:0004930">
    <property type="term" value="F:G protein-coupled receptor activity"/>
    <property type="evidence" value="ECO:0000304"/>
    <property type="project" value="ProtInc"/>
</dbReference>
<dbReference type="GO" id="GO:0005184">
    <property type="term" value="F:neuropeptide hormone activity"/>
    <property type="evidence" value="ECO:0000318"/>
    <property type="project" value="GO_Central"/>
</dbReference>
<dbReference type="GO" id="GO:0031841">
    <property type="term" value="F:neuropeptide Y receptor binding"/>
    <property type="evidence" value="ECO:0000318"/>
    <property type="project" value="GO_Central"/>
</dbReference>
<dbReference type="GO" id="GO:0005102">
    <property type="term" value="F:signaling receptor binding"/>
    <property type="evidence" value="ECO:0000304"/>
    <property type="project" value="ProtInc"/>
</dbReference>
<dbReference type="GO" id="GO:0008343">
    <property type="term" value="P:adult feeding behavior"/>
    <property type="evidence" value="ECO:0000250"/>
    <property type="project" value="HGNC-UCL"/>
</dbReference>
<dbReference type="GO" id="GO:0021954">
    <property type="term" value="P:central nervous system neuron development"/>
    <property type="evidence" value="ECO:0000270"/>
    <property type="project" value="DFLAT"/>
</dbReference>
<dbReference type="GO" id="GO:0021987">
    <property type="term" value="P:cerebral cortex development"/>
    <property type="evidence" value="ECO:0000270"/>
    <property type="project" value="DFLAT"/>
</dbReference>
<dbReference type="GO" id="GO:0007268">
    <property type="term" value="P:chemical synaptic transmission"/>
    <property type="evidence" value="ECO:0000304"/>
    <property type="project" value="ProtInc"/>
</dbReference>
<dbReference type="GO" id="GO:0007631">
    <property type="term" value="P:feeding behavior"/>
    <property type="evidence" value="ECO:0000318"/>
    <property type="project" value="GO_Central"/>
</dbReference>
<dbReference type="GO" id="GO:0007187">
    <property type="term" value="P:G protein-coupled receptor signaling pathway, coupled to cyclic nucleotide second messenger"/>
    <property type="evidence" value="ECO:0000304"/>
    <property type="project" value="ProtInc"/>
</dbReference>
<dbReference type="GO" id="GO:0060575">
    <property type="term" value="P:intestinal epithelial cell differentiation"/>
    <property type="evidence" value="ECO:0000304"/>
    <property type="project" value="GO_Central"/>
</dbReference>
<dbReference type="GO" id="GO:0042117">
    <property type="term" value="P:monocyte activation"/>
    <property type="evidence" value="ECO:0007669"/>
    <property type="project" value="Ensembl"/>
</dbReference>
<dbReference type="GO" id="GO:0002865">
    <property type="term" value="P:negative regulation of acute inflammatory response to antigenic stimulus"/>
    <property type="evidence" value="ECO:0007669"/>
    <property type="project" value="Ensembl"/>
</dbReference>
<dbReference type="GO" id="GO:0045776">
    <property type="term" value="P:negative regulation of blood pressure"/>
    <property type="evidence" value="ECO:0007669"/>
    <property type="project" value="Ensembl"/>
</dbReference>
<dbReference type="GO" id="GO:0031175">
    <property type="term" value="P:neuron projection development"/>
    <property type="evidence" value="ECO:0000270"/>
    <property type="project" value="DFLAT"/>
</dbReference>
<dbReference type="GO" id="GO:0007218">
    <property type="term" value="P:neuropeptide signaling pathway"/>
    <property type="evidence" value="ECO:0000318"/>
    <property type="project" value="GO_Central"/>
</dbReference>
<dbReference type="GO" id="GO:0032100">
    <property type="term" value="P:positive regulation of appetite"/>
    <property type="evidence" value="ECO:0000250"/>
    <property type="project" value="HGNC-UCL"/>
</dbReference>
<dbReference type="GO" id="GO:0008284">
    <property type="term" value="P:positive regulation of cell population proliferation"/>
    <property type="evidence" value="ECO:0007669"/>
    <property type="project" value="Ensembl"/>
</dbReference>
<dbReference type="GO" id="GO:0010811">
    <property type="term" value="P:positive regulation of cell-substrate adhesion"/>
    <property type="evidence" value="ECO:0007669"/>
    <property type="project" value="Ensembl"/>
</dbReference>
<dbReference type="GO" id="GO:0045964">
    <property type="term" value="P:positive regulation of dopamine metabolic process"/>
    <property type="evidence" value="ECO:0007669"/>
    <property type="project" value="Ensembl"/>
</dbReference>
<dbReference type="GO" id="GO:1904000">
    <property type="term" value="P:positive regulation of eating behavior"/>
    <property type="evidence" value="ECO:0007669"/>
    <property type="project" value="Ensembl"/>
</dbReference>
<dbReference type="GO" id="GO:0070374">
    <property type="term" value="P:positive regulation of ERK1 and ERK2 cascade"/>
    <property type="evidence" value="ECO:0007669"/>
    <property type="project" value="Ensembl"/>
</dbReference>
<dbReference type="GO" id="GO:1904407">
    <property type="term" value="P:positive regulation of nitric oxide metabolic process"/>
    <property type="evidence" value="ECO:0007669"/>
    <property type="project" value="Ensembl"/>
</dbReference>
<dbReference type="GO" id="GO:0032903">
    <property type="term" value="P:regulation of nerve growth factor production"/>
    <property type="evidence" value="ECO:0007669"/>
    <property type="project" value="Ensembl"/>
</dbReference>
<dbReference type="GO" id="GO:0099509">
    <property type="term" value="P:regulation of presynaptic cytosolic calcium ion concentration"/>
    <property type="evidence" value="ECO:0007669"/>
    <property type="project" value="Ensembl"/>
</dbReference>
<dbReference type="GO" id="GO:2000300">
    <property type="term" value="P:regulation of synaptic vesicle exocytosis"/>
    <property type="evidence" value="ECO:0007669"/>
    <property type="project" value="Ensembl"/>
</dbReference>
<dbReference type="GO" id="GO:0048572">
    <property type="term" value="P:short-day photoperiodism"/>
    <property type="evidence" value="ECO:0007669"/>
    <property type="project" value="Ensembl"/>
</dbReference>
<dbReference type="GO" id="GO:0099538">
    <property type="term" value="P:synaptic signaling via neuropeptide"/>
    <property type="evidence" value="ECO:0007669"/>
    <property type="project" value="Ensembl"/>
</dbReference>
<dbReference type="CDD" id="cd00126">
    <property type="entry name" value="PAH"/>
    <property type="match status" value="1"/>
</dbReference>
<dbReference type="Gene3D" id="6.10.250.900">
    <property type="match status" value="1"/>
</dbReference>
<dbReference type="InterPro" id="IPR001955">
    <property type="entry name" value="Pancreatic_hormone-like"/>
</dbReference>
<dbReference type="InterPro" id="IPR020392">
    <property type="entry name" value="Pancreatic_hormone-like_CS"/>
</dbReference>
<dbReference type="PANTHER" id="PTHR10533">
    <property type="entry name" value="NEUROPEPTIDE Y/PANCREATIC HORMONE/PEPTIDE YY"/>
    <property type="match status" value="1"/>
</dbReference>
<dbReference type="PANTHER" id="PTHR10533:SF5">
    <property type="entry name" value="PRO-NEUROPEPTIDE Y"/>
    <property type="match status" value="1"/>
</dbReference>
<dbReference type="Pfam" id="PF00159">
    <property type="entry name" value="Hormone_3"/>
    <property type="match status" value="1"/>
</dbReference>
<dbReference type="PRINTS" id="PR00278">
    <property type="entry name" value="PANCHORMONE"/>
</dbReference>
<dbReference type="SMART" id="SM00309">
    <property type="entry name" value="PAH"/>
    <property type="match status" value="1"/>
</dbReference>
<dbReference type="PROSITE" id="PS00265">
    <property type="entry name" value="PANCREATIC_HORMONE_1"/>
    <property type="match status" value="1"/>
</dbReference>
<dbReference type="PROSITE" id="PS50276">
    <property type="entry name" value="PANCREATIC_HORMONE_2"/>
    <property type="match status" value="1"/>
</dbReference>
<sequence length="97" mass="10851">MLGNKRLGLSGLTLALSLLVCLGALAEAYPSKPDNPGEDAPAEDMARYYSALRHYINLITRQRYGKRSSPETLISDLLMRESTENVPRTRLEDPAMW</sequence>